<gene>
    <name type="primary">RAD23</name>
    <name type="ordered locus">YEL037C</name>
    <name type="ORF">SYGP-ORF29</name>
</gene>
<keyword id="KW-0002">3D-structure</keyword>
<keyword id="KW-0963">Cytoplasm</keyword>
<keyword id="KW-0227">DNA damage</keyword>
<keyword id="KW-0234">DNA repair</keyword>
<keyword id="KW-1017">Isopeptide bond</keyword>
<keyword id="KW-0539">Nucleus</keyword>
<keyword id="KW-0597">Phosphoprotein</keyword>
<keyword id="KW-1185">Reference proteome</keyword>
<keyword id="KW-0677">Repeat</keyword>
<keyword id="KW-0832">Ubl conjugation</keyword>
<keyword id="KW-0833">Ubl conjugation pathway</keyword>
<dbReference type="EMBL" id="L25428">
    <property type="protein sequence ID" value="AAA16070.1"/>
    <property type="molecule type" value="Unassigned_DNA"/>
</dbReference>
<dbReference type="EMBL" id="L22172">
    <property type="protein sequence ID" value="AAA34935.1"/>
    <property type="molecule type" value="Genomic_DNA"/>
</dbReference>
<dbReference type="EMBL" id="L22173">
    <property type="protein sequence ID" value="AAA34938.1"/>
    <property type="molecule type" value="Genomic_DNA"/>
</dbReference>
<dbReference type="EMBL" id="S65964">
    <property type="protein sequence ID" value="AAD13972.1"/>
    <property type="molecule type" value="Genomic_DNA"/>
</dbReference>
<dbReference type="EMBL" id="S66117">
    <property type="protein sequence ID" value="AAB28441.1"/>
    <property type="molecule type" value="mRNA"/>
</dbReference>
<dbReference type="EMBL" id="U18779">
    <property type="protein sequence ID" value="AAB65005.1"/>
    <property type="molecule type" value="Genomic_DNA"/>
</dbReference>
<dbReference type="EMBL" id="AY693018">
    <property type="protein sequence ID" value="AAT93037.1"/>
    <property type="molecule type" value="Genomic_DNA"/>
</dbReference>
<dbReference type="EMBL" id="BK006939">
    <property type="protein sequence ID" value="DAA07616.1"/>
    <property type="molecule type" value="Genomic_DNA"/>
</dbReference>
<dbReference type="PIR" id="S50507">
    <property type="entry name" value="S50507"/>
</dbReference>
<dbReference type="RefSeq" id="NP_010877.3">
    <property type="nucleotide sequence ID" value="NM_001178852.3"/>
</dbReference>
<dbReference type="PDB" id="1X3W">
    <property type="method" value="X-ray"/>
    <property type="resolution" value="3.00 A"/>
    <property type="chains" value="B=238-309"/>
</dbReference>
<dbReference type="PDB" id="1X3Z">
    <property type="method" value="X-ray"/>
    <property type="resolution" value="2.80 A"/>
    <property type="chains" value="B=238-309"/>
</dbReference>
<dbReference type="PDB" id="2NBU">
    <property type="method" value="NMR"/>
    <property type="chains" value="A=1-78"/>
</dbReference>
<dbReference type="PDB" id="2NBW">
    <property type="method" value="NMR"/>
    <property type="chains" value="B=1-78"/>
</dbReference>
<dbReference type="PDB" id="2QSF">
    <property type="method" value="X-ray"/>
    <property type="resolution" value="2.35 A"/>
    <property type="chains" value="X=230-398"/>
</dbReference>
<dbReference type="PDB" id="2QSG">
    <property type="method" value="X-ray"/>
    <property type="resolution" value="3.10 A"/>
    <property type="chains" value="X=230-398"/>
</dbReference>
<dbReference type="PDB" id="2QSH">
    <property type="method" value="X-ray"/>
    <property type="resolution" value="2.81 A"/>
    <property type="chains" value="X=230-398"/>
</dbReference>
<dbReference type="PDB" id="3ESW">
    <property type="method" value="X-ray"/>
    <property type="resolution" value="3.40 A"/>
    <property type="chains" value="B=254-308"/>
</dbReference>
<dbReference type="PDB" id="3M62">
    <property type="method" value="X-ray"/>
    <property type="resolution" value="2.40 A"/>
    <property type="chains" value="B=1-84"/>
</dbReference>
<dbReference type="PDB" id="4YIR">
    <property type="method" value="X-ray"/>
    <property type="resolution" value="3.05 A"/>
    <property type="chains" value="X=230-398"/>
</dbReference>
<dbReference type="PDB" id="6CFI">
    <property type="method" value="X-ray"/>
    <property type="resolution" value="3.36 A"/>
    <property type="chains" value="X=230-398"/>
</dbReference>
<dbReference type="PDB" id="6UBF">
    <property type="method" value="X-ray"/>
    <property type="resolution" value="4.60 A"/>
    <property type="chains" value="X=230-398"/>
</dbReference>
<dbReference type="PDB" id="6UG1">
    <property type="method" value="X-ray"/>
    <property type="resolution" value="2.83 A"/>
    <property type="chains" value="X=256-311"/>
</dbReference>
<dbReference type="PDB" id="6UIN">
    <property type="method" value="X-ray"/>
    <property type="resolution" value="3.35 A"/>
    <property type="chains" value="X=230-398"/>
</dbReference>
<dbReference type="PDBsum" id="1X3W"/>
<dbReference type="PDBsum" id="1X3Z"/>
<dbReference type="PDBsum" id="2NBU"/>
<dbReference type="PDBsum" id="2NBW"/>
<dbReference type="PDBsum" id="2QSF"/>
<dbReference type="PDBsum" id="2QSG"/>
<dbReference type="PDBsum" id="2QSH"/>
<dbReference type="PDBsum" id="3ESW"/>
<dbReference type="PDBsum" id="3M62"/>
<dbReference type="PDBsum" id="4YIR"/>
<dbReference type="PDBsum" id="6CFI"/>
<dbReference type="PDBsum" id="6UBF"/>
<dbReference type="PDBsum" id="6UG1"/>
<dbReference type="PDBsum" id="6UIN"/>
<dbReference type="EMDB" id="EMD-6496"/>
<dbReference type="SMR" id="P32628"/>
<dbReference type="BioGRID" id="36692">
    <property type="interactions" value="271"/>
</dbReference>
<dbReference type="ComplexPortal" id="CPX-1320">
    <property type="entry name" value="Peptide:N-glycanase-Rad23 complex"/>
</dbReference>
<dbReference type="ComplexPortal" id="CPX-1323">
    <property type="entry name" value="CDC48-RAD23-UFD2 complex"/>
</dbReference>
<dbReference type="ComplexPortal" id="CPX-1640">
    <property type="entry name" value="Nucleotide excision repair factor 2 complex"/>
</dbReference>
<dbReference type="DIP" id="DIP-1548N"/>
<dbReference type="FunCoup" id="P32628">
    <property type="interactions" value="1243"/>
</dbReference>
<dbReference type="IntAct" id="P32628">
    <property type="interactions" value="61"/>
</dbReference>
<dbReference type="MINT" id="P32628"/>
<dbReference type="STRING" id="4932.YEL037C"/>
<dbReference type="GlyGen" id="P32628">
    <property type="glycosylation" value="1 site"/>
</dbReference>
<dbReference type="iPTMnet" id="P32628"/>
<dbReference type="PaxDb" id="4932-YEL037C"/>
<dbReference type="PeptideAtlas" id="P32628"/>
<dbReference type="EnsemblFungi" id="YEL037C_mRNA">
    <property type="protein sequence ID" value="YEL037C"/>
    <property type="gene ID" value="YEL037C"/>
</dbReference>
<dbReference type="GeneID" id="856674"/>
<dbReference type="KEGG" id="sce:YEL037C"/>
<dbReference type="AGR" id="SGD:S000000763"/>
<dbReference type="SGD" id="S000000763">
    <property type="gene designation" value="RAD23"/>
</dbReference>
<dbReference type="VEuPathDB" id="FungiDB:YEL037C"/>
<dbReference type="eggNOG" id="KOG0011">
    <property type="taxonomic scope" value="Eukaryota"/>
</dbReference>
<dbReference type="GeneTree" id="ENSGT00390000012078"/>
<dbReference type="HOGENOM" id="CLU_040364_0_0_1"/>
<dbReference type="InParanoid" id="P32628"/>
<dbReference type="OMA" id="PHMLEPI"/>
<dbReference type="OrthoDB" id="419317at2759"/>
<dbReference type="BioCyc" id="YEAST:G3O-30158-MONOMER"/>
<dbReference type="BioGRID-ORCS" id="856674">
    <property type="hits" value="0 hits in 10 CRISPR screens"/>
</dbReference>
<dbReference type="CD-CODE" id="256AC21A">
    <property type="entry name" value="Proteasome condensate"/>
</dbReference>
<dbReference type="EvolutionaryTrace" id="P32628"/>
<dbReference type="PRO" id="PR:P32628"/>
<dbReference type="Proteomes" id="UP000002311">
    <property type="component" value="Chromosome V"/>
</dbReference>
<dbReference type="RNAct" id="P32628">
    <property type="molecule type" value="protein"/>
</dbReference>
<dbReference type="GO" id="GO:0005737">
    <property type="term" value="C:cytoplasm"/>
    <property type="evidence" value="ECO:0000314"/>
    <property type="project" value="ComplexPortal"/>
</dbReference>
<dbReference type="GO" id="GO:0005829">
    <property type="term" value="C:cytosol"/>
    <property type="evidence" value="ECO:0000318"/>
    <property type="project" value="GO_Central"/>
</dbReference>
<dbReference type="GO" id="GO:0005739">
    <property type="term" value="C:mitochondrion"/>
    <property type="evidence" value="ECO:0007005"/>
    <property type="project" value="SGD"/>
</dbReference>
<dbReference type="GO" id="GO:0005654">
    <property type="term" value="C:nucleoplasm"/>
    <property type="evidence" value="ECO:0000318"/>
    <property type="project" value="GO_Central"/>
</dbReference>
<dbReference type="GO" id="GO:0000111">
    <property type="term" value="C:nucleotide-excision repair factor 2 complex"/>
    <property type="evidence" value="ECO:0000314"/>
    <property type="project" value="SGD"/>
</dbReference>
<dbReference type="GO" id="GO:0120125">
    <property type="term" value="C:PNGase complex"/>
    <property type="evidence" value="ECO:0000353"/>
    <property type="project" value="ComplexPortal"/>
</dbReference>
<dbReference type="GO" id="GO:0003684">
    <property type="term" value="F:damaged DNA binding"/>
    <property type="evidence" value="ECO:0000314"/>
    <property type="project" value="SGD"/>
</dbReference>
<dbReference type="GO" id="GO:0036435">
    <property type="term" value="F:K48-linked polyubiquitin modification-dependent protein binding"/>
    <property type="evidence" value="ECO:0000314"/>
    <property type="project" value="SGD"/>
</dbReference>
<dbReference type="GO" id="GO:0031593">
    <property type="term" value="F:polyubiquitin modification-dependent protein binding"/>
    <property type="evidence" value="ECO:0000318"/>
    <property type="project" value="GO_Central"/>
</dbReference>
<dbReference type="GO" id="GO:0070628">
    <property type="term" value="F:proteasome binding"/>
    <property type="evidence" value="ECO:0000314"/>
    <property type="project" value="SGD"/>
</dbReference>
<dbReference type="GO" id="GO:0030674">
    <property type="term" value="F:protein-macromolecule adaptor activity"/>
    <property type="evidence" value="ECO:0000353"/>
    <property type="project" value="SGD"/>
</dbReference>
<dbReference type="GO" id="GO:0043130">
    <property type="term" value="F:ubiquitin binding"/>
    <property type="evidence" value="ECO:0000314"/>
    <property type="project" value="SGD"/>
</dbReference>
<dbReference type="GO" id="GO:0036503">
    <property type="term" value="P:ERAD pathway"/>
    <property type="evidence" value="ECO:0000314"/>
    <property type="project" value="ComplexPortal"/>
</dbReference>
<dbReference type="GO" id="GO:0000122">
    <property type="term" value="P:negative regulation of transcription by RNA polymerase II"/>
    <property type="evidence" value="ECO:0000315"/>
    <property type="project" value="SGD"/>
</dbReference>
<dbReference type="GO" id="GO:0000715">
    <property type="term" value="P:nucleotide-excision repair, DNA damage recognition"/>
    <property type="evidence" value="ECO:0000303"/>
    <property type="project" value="ComplexPortal"/>
</dbReference>
<dbReference type="GO" id="GO:0043161">
    <property type="term" value="P:proteasome-mediated ubiquitin-dependent protein catabolic process"/>
    <property type="evidence" value="ECO:0000315"/>
    <property type="project" value="SGD"/>
</dbReference>
<dbReference type="CDD" id="cd14378">
    <property type="entry name" value="UBA1_Rhp23p_like"/>
    <property type="match status" value="1"/>
</dbReference>
<dbReference type="CDD" id="cd14381">
    <property type="entry name" value="UBA2_Rhp23p_like"/>
    <property type="match status" value="1"/>
</dbReference>
<dbReference type="CDD" id="cd01805">
    <property type="entry name" value="Ubl_Rad23"/>
    <property type="match status" value="1"/>
</dbReference>
<dbReference type="DisProt" id="DP01629"/>
<dbReference type="FunFam" id="3.10.20.90:FF:000299">
    <property type="entry name" value="Rad23p"/>
    <property type="match status" value="1"/>
</dbReference>
<dbReference type="FunFam" id="1.10.10.540:FF:000003">
    <property type="entry name" value="UV excision repair protein RAD23"/>
    <property type="match status" value="1"/>
</dbReference>
<dbReference type="FunFam" id="1.10.8.10:FF:000002">
    <property type="entry name" value="UV excision repair protein RAD23 homolog"/>
    <property type="match status" value="1"/>
</dbReference>
<dbReference type="FunFam" id="1.10.8.10:FF:000003">
    <property type="entry name" value="UV excision repair protein RAD23 homolog"/>
    <property type="match status" value="1"/>
</dbReference>
<dbReference type="Gene3D" id="1.10.8.10">
    <property type="entry name" value="DNA helicase RuvA subunit, C-terminal domain"/>
    <property type="match status" value="2"/>
</dbReference>
<dbReference type="Gene3D" id="3.10.20.90">
    <property type="entry name" value="Phosphatidylinositol 3-kinase Catalytic Subunit, Chain A, domain 1"/>
    <property type="match status" value="1"/>
</dbReference>
<dbReference type="Gene3D" id="1.10.10.540">
    <property type="entry name" value="XPC-binding domain"/>
    <property type="match status" value="1"/>
</dbReference>
<dbReference type="InterPro" id="IPR004806">
    <property type="entry name" value="Rad23"/>
</dbReference>
<dbReference type="InterPro" id="IPR006636">
    <property type="entry name" value="STI1_HS-bd"/>
</dbReference>
<dbReference type="InterPro" id="IPR015940">
    <property type="entry name" value="UBA"/>
</dbReference>
<dbReference type="InterPro" id="IPR009060">
    <property type="entry name" value="UBA-like_sf"/>
</dbReference>
<dbReference type="InterPro" id="IPR000626">
    <property type="entry name" value="Ubiquitin-like_dom"/>
</dbReference>
<dbReference type="InterPro" id="IPR029071">
    <property type="entry name" value="Ubiquitin-like_domsf"/>
</dbReference>
<dbReference type="InterPro" id="IPR015360">
    <property type="entry name" value="XPC-bd"/>
</dbReference>
<dbReference type="InterPro" id="IPR036353">
    <property type="entry name" value="XPC-bd_sf"/>
</dbReference>
<dbReference type="NCBIfam" id="TIGR00601">
    <property type="entry name" value="rad23"/>
    <property type="match status" value="1"/>
</dbReference>
<dbReference type="PANTHER" id="PTHR10621">
    <property type="entry name" value="UV EXCISION REPAIR PROTEIN RAD23"/>
    <property type="match status" value="1"/>
</dbReference>
<dbReference type="PANTHER" id="PTHR10621:SF0">
    <property type="entry name" value="UV EXCISION REPAIR PROTEIN RAD23"/>
    <property type="match status" value="1"/>
</dbReference>
<dbReference type="Pfam" id="PF00627">
    <property type="entry name" value="UBA"/>
    <property type="match status" value="2"/>
</dbReference>
<dbReference type="Pfam" id="PF00240">
    <property type="entry name" value="ubiquitin"/>
    <property type="match status" value="1"/>
</dbReference>
<dbReference type="Pfam" id="PF09280">
    <property type="entry name" value="XPC-binding"/>
    <property type="match status" value="1"/>
</dbReference>
<dbReference type="PRINTS" id="PR01839">
    <property type="entry name" value="RAD23PROTEIN"/>
</dbReference>
<dbReference type="SMART" id="SM00727">
    <property type="entry name" value="STI1"/>
    <property type="match status" value="1"/>
</dbReference>
<dbReference type="SMART" id="SM00165">
    <property type="entry name" value="UBA"/>
    <property type="match status" value="2"/>
</dbReference>
<dbReference type="SMART" id="SM00213">
    <property type="entry name" value="UBQ"/>
    <property type="match status" value="1"/>
</dbReference>
<dbReference type="SUPFAM" id="SSF46934">
    <property type="entry name" value="UBA-like"/>
    <property type="match status" value="2"/>
</dbReference>
<dbReference type="SUPFAM" id="SSF54236">
    <property type="entry name" value="Ubiquitin-like"/>
    <property type="match status" value="1"/>
</dbReference>
<dbReference type="SUPFAM" id="SSF101238">
    <property type="entry name" value="XPC-binding domain"/>
    <property type="match status" value="1"/>
</dbReference>
<dbReference type="PROSITE" id="PS50030">
    <property type="entry name" value="UBA"/>
    <property type="match status" value="2"/>
</dbReference>
<dbReference type="PROSITE" id="PS50053">
    <property type="entry name" value="UBIQUITIN_2"/>
    <property type="match status" value="1"/>
</dbReference>
<sequence>MVSLTFKNFKKEKVPLDLEPSNTILETKTKLAQSISCEESQIKLIYSGKVLQDSKTVSECGLKDGDQVVFMVSQKKSTKTKVTEPPIAPESATTPGRENSTEASPSTDASAAPAATAPEGSQPQEEQTATTERTESASTPGFVVGTERNETIERIMEMGYQREEVERALRAAFNNPDRAVEYLLMGIPENLRQPEPQQQTAAAAEQPSTAATTAEQPAEDDLFAQAAQGGNASSGALGTTGGATDAAQGGPPGSIGLTVEDLLSLRQVVSGNPEALAPLLENISARYPQLREHIMANPEVFVSMLLEAVGDNMQDVMEGADDMVEGEDIEVTGEAAAAGLGQGEGEGSFQVDYTPEDDQAISRLCELGFERDLVIQVYFACDKNEEAAANILFSDHAD</sequence>
<proteinExistence type="evidence at protein level"/>
<evidence type="ECO:0000255" key="1">
    <source>
        <dbReference type="PROSITE-ProRule" id="PRU00212"/>
    </source>
</evidence>
<evidence type="ECO:0000255" key="2">
    <source>
        <dbReference type="PROSITE-ProRule" id="PRU00214"/>
    </source>
</evidence>
<evidence type="ECO:0000256" key="3">
    <source>
        <dbReference type="SAM" id="MobiDB-lite"/>
    </source>
</evidence>
<evidence type="ECO:0000269" key="4">
    <source>
    </source>
</evidence>
<evidence type="ECO:0000269" key="5">
    <source>
    </source>
</evidence>
<evidence type="ECO:0000269" key="6">
    <source>
    </source>
</evidence>
<evidence type="ECO:0000269" key="7">
    <source>
    </source>
</evidence>
<evidence type="ECO:0000305" key="8"/>
<evidence type="ECO:0007744" key="9">
    <source>
    </source>
</evidence>
<evidence type="ECO:0007744" key="10">
    <source>
    </source>
</evidence>
<evidence type="ECO:0007744" key="11">
    <source>
    </source>
</evidence>
<evidence type="ECO:0007744" key="12">
    <source>
    </source>
</evidence>
<evidence type="ECO:0007829" key="13">
    <source>
        <dbReference type="PDB" id="2NBW"/>
    </source>
</evidence>
<evidence type="ECO:0007829" key="14">
    <source>
        <dbReference type="PDB" id="2QSF"/>
    </source>
</evidence>
<evidence type="ECO:0007829" key="15">
    <source>
        <dbReference type="PDB" id="3M62"/>
    </source>
</evidence>
<organism>
    <name type="scientific">Saccharomyces cerevisiae (strain ATCC 204508 / S288c)</name>
    <name type="common">Baker's yeast</name>
    <dbReference type="NCBI Taxonomy" id="559292"/>
    <lineage>
        <taxon>Eukaryota</taxon>
        <taxon>Fungi</taxon>
        <taxon>Dikarya</taxon>
        <taxon>Ascomycota</taxon>
        <taxon>Saccharomycotina</taxon>
        <taxon>Saccharomycetes</taxon>
        <taxon>Saccharomycetales</taxon>
        <taxon>Saccharomycetaceae</taxon>
        <taxon>Saccharomyces</taxon>
    </lineage>
</organism>
<accession>P32628</accession>
<accession>D3DLL2</accession>
<protein>
    <recommendedName>
        <fullName>UV excision repair protein RAD23</fullName>
    </recommendedName>
</protein>
<comment type="function">
    <text>Plays a central role both in proteasomal degradation of misfolded proteins and DNA repair. Central component of a complex required to couple deglycosylation and proteasome-mediated degradation of misfolded proteins in the endoplasmic reticulum that are retrotranslocated in the cytosol. Involved in DNA excision repair. May play a part in DNA damage recognition and/or in altering chromatin structure to allow access by damage-processing enzymes.</text>
</comment>
<comment type="subunit">
    <text evidence="6 7">Interacts directly with PNG1.</text>
</comment>
<comment type="interaction">
    <interactant intactId="EBI-14668">
        <id>P32628</id>
    </interactant>
    <interactant intactId="EBI-4308">
        <id>P25694</id>
        <label>CDC48</label>
    </interactant>
    <organismsDiffer>false</organismsDiffer>
    <experiments>2</experiments>
</comment>
<comment type="interaction">
    <interactant intactId="EBI-14668">
        <id>P32628</id>
    </interactant>
    <interactant intactId="EBI-38139">
        <id>Q02890</id>
        <label>PNG1</label>
    </interactant>
    <organismsDiffer>false</organismsDiffer>
    <experiments>4</experiments>
</comment>
<comment type="interaction">
    <interactant intactId="EBI-14668">
        <id>P32628</id>
    </interactant>
    <interactant intactId="EBI-13988">
        <id>P22141</id>
        <label>PRE1</label>
    </interactant>
    <organismsDiffer>false</organismsDiffer>
    <experiments>3</experiments>
</comment>
<comment type="interaction">
    <interactant intactId="EBI-14668">
        <id>P32628</id>
    </interactant>
    <interactant intactId="EBI-2345448">
        <id>P34222</id>
        <label>PTH2</label>
    </interactant>
    <organismsDiffer>false</organismsDiffer>
    <experiments>5</experiments>
</comment>
<comment type="interaction">
    <interactant intactId="EBI-14668">
        <id>P32628</id>
    </interactant>
    <interactant intactId="EBI-14009">
        <id>P25043</id>
        <label>PUP1</label>
    </interactant>
    <organismsDiffer>false</organismsDiffer>
    <experiments>2</experiments>
</comment>
<comment type="interaction">
    <interactant intactId="EBI-14668">
        <id>P32628</id>
    </interactant>
    <interactant intactId="EBI-14766">
        <id>P14736</id>
        <label>RAD4</label>
    </interactant>
    <organismsDiffer>false</organismsDiffer>
    <experiments>9</experiments>
</comment>
<comment type="interaction">
    <interactant intactId="EBI-14668">
        <id>P32628</id>
    </interactant>
    <interactant intactId="EBI-15913">
        <id>P38764</id>
        <label>RPN1</label>
    </interactant>
    <organismsDiffer>false</organismsDiffer>
    <experiments>12</experiments>
</comment>
<comment type="interaction">
    <interactant intactId="EBI-14668">
        <id>P32628</id>
    </interactant>
    <interactant intactId="EBI-13910">
        <id>P33299</id>
        <label>RPT1</label>
    </interactant>
    <organismsDiffer>false</organismsDiffer>
    <experiments>8</experiments>
</comment>
<comment type="interaction">
    <interactant intactId="EBI-14668">
        <id>P32628</id>
    </interactant>
    <interactant intactId="EBI-13905">
        <id>P33298</id>
        <label>RPT3</label>
    </interactant>
    <organismsDiffer>false</organismsDiffer>
    <experiments>3</experiments>
</comment>
<comment type="interaction">
    <interactant intactId="EBI-14668">
        <id>P32628</id>
    </interactant>
    <interactant intactId="EBI-13920">
        <id>P33297</id>
        <label>RPT5</label>
    </interactant>
    <organismsDiffer>false</organismsDiffer>
    <experiments>2</experiments>
</comment>
<comment type="interaction">
    <interactant intactId="EBI-14668">
        <id>P32628</id>
    </interactant>
    <interactant intactId="EBI-13914">
        <id>Q01939</id>
        <label>RPT6</label>
    </interactant>
    <organismsDiffer>false</organismsDiffer>
    <experiments>7</experiments>
</comment>
<comment type="interaction">
    <interactant intactId="EBI-14668">
        <id>P32628</id>
    </interactant>
    <interactant intactId="EBI-17550">
        <id>P18888</id>
        <label>SNF6</label>
    </interactant>
    <organismsDiffer>false</organismsDiffer>
    <experiments>2</experiments>
</comment>
<comment type="interaction">
    <interactant intactId="EBI-14668">
        <id>P32628</id>
    </interactant>
    <interactant intactId="EBI-7000452">
        <id>P0CG63</id>
        <label>UBI4</label>
    </interactant>
    <organismsDiffer>false</organismsDiffer>
    <experiments>4</experiments>
</comment>
<comment type="interaction">
    <interactant intactId="EBI-14668">
        <id>P32628</id>
    </interactant>
    <interactant intactId="EBI-20003">
        <id>P54860</id>
        <label>UFD2</label>
    </interactant>
    <organismsDiffer>false</organismsDiffer>
    <experiments>7</experiments>
</comment>
<comment type="interaction">
    <interactant intactId="EBI-14668">
        <id>P32628</id>
    </interactant>
    <interactant intactId="EBI-3390054">
        <id>P0CG48</id>
        <label>UBC</label>
    </interactant>
    <organismsDiffer>true</organismsDiffer>
    <experiments>2</experiments>
</comment>
<comment type="subcellular location">
    <subcellularLocation>
        <location evidence="4">Nucleus</location>
    </subcellularLocation>
    <subcellularLocation>
        <location evidence="4">Cytoplasm</location>
    </subcellularLocation>
</comment>
<comment type="miscellaneous">
    <text evidence="5">Present with 10900 molecules/cell in log phase SD medium.</text>
</comment>
<feature type="chain" id="PRO_0000114902" description="UV excision repair protein RAD23">
    <location>
        <begin position="1"/>
        <end position="398"/>
    </location>
</feature>
<feature type="domain" description="Ubiquitin-like" evidence="2">
    <location>
        <begin position="1"/>
        <end position="77"/>
    </location>
</feature>
<feature type="domain" description="UBA 1" evidence="1">
    <location>
        <begin position="146"/>
        <end position="186"/>
    </location>
</feature>
<feature type="domain" description="UBA 2" evidence="1">
    <location>
        <begin position="355"/>
        <end position="395"/>
    </location>
</feature>
<feature type="region of interest" description="Disordered" evidence="3">
    <location>
        <begin position="75"/>
        <end position="149"/>
    </location>
</feature>
<feature type="region of interest" description="Disordered" evidence="3">
    <location>
        <begin position="195"/>
        <end position="216"/>
    </location>
</feature>
<feature type="region of interest" description="Disordered" evidence="3">
    <location>
        <begin position="229"/>
        <end position="252"/>
    </location>
</feature>
<feature type="compositionally biased region" description="Low complexity" evidence="3">
    <location>
        <begin position="101"/>
        <end position="140"/>
    </location>
</feature>
<feature type="compositionally biased region" description="Low complexity" evidence="3">
    <location>
        <begin position="229"/>
        <end position="249"/>
    </location>
</feature>
<feature type="modified residue" description="Phosphothreonine" evidence="11">
    <location>
        <position position="94"/>
    </location>
</feature>
<feature type="modified residue" description="Phosphoserine" evidence="10">
    <location>
        <position position="121"/>
    </location>
</feature>
<feature type="modified residue" description="Phosphothreonine" evidence="9 11">
    <location>
        <position position="139"/>
    </location>
</feature>
<feature type="cross-link" description="Glycyl lysine isopeptide (Lys-Gly) (interchain with G-Cter in ubiquitin)" evidence="12">
    <location>
        <position position="49"/>
    </location>
</feature>
<feature type="sequence conflict" description="In Ref. 2; AAA34935/AAA34938/AAD13972/AAB28441." evidence="8" ref="2">
    <original>A</original>
    <variation>R</variation>
    <location>
        <position position="277"/>
    </location>
</feature>
<feature type="strand" evidence="15">
    <location>
        <begin position="4"/>
        <end position="7"/>
    </location>
</feature>
<feature type="strand" evidence="13">
    <location>
        <begin position="9"/>
        <end position="11"/>
    </location>
</feature>
<feature type="strand" evidence="15">
    <location>
        <begin position="13"/>
        <end position="16"/>
    </location>
</feature>
<feature type="helix" evidence="15">
    <location>
        <begin position="24"/>
        <end position="33"/>
    </location>
</feature>
<feature type="turn" evidence="15">
    <location>
        <begin position="34"/>
        <end position="36"/>
    </location>
</feature>
<feature type="helix" evidence="15">
    <location>
        <begin position="39"/>
        <end position="41"/>
    </location>
</feature>
<feature type="strand" evidence="15">
    <location>
        <begin position="43"/>
        <end position="46"/>
    </location>
</feature>
<feature type="turn" evidence="15">
    <location>
        <begin position="57"/>
        <end position="61"/>
    </location>
</feature>
<feature type="strand" evidence="15">
    <location>
        <begin position="67"/>
        <end position="71"/>
    </location>
</feature>
<feature type="helix" evidence="14">
    <location>
        <begin position="259"/>
        <end position="270"/>
    </location>
</feature>
<feature type="helix" evidence="14">
    <location>
        <begin position="273"/>
        <end position="275"/>
    </location>
</feature>
<feature type="helix" evidence="14">
    <location>
        <begin position="276"/>
        <end position="286"/>
    </location>
</feature>
<feature type="helix" evidence="14">
    <location>
        <begin position="290"/>
        <end position="296"/>
    </location>
</feature>
<feature type="helix" evidence="14">
    <location>
        <begin position="298"/>
        <end position="307"/>
    </location>
</feature>
<feature type="helix" evidence="14">
    <location>
        <begin position="355"/>
        <end position="365"/>
    </location>
</feature>
<feature type="turn" evidence="14">
    <location>
        <begin position="366"/>
        <end position="368"/>
    </location>
</feature>
<feature type="helix" evidence="14">
    <location>
        <begin position="371"/>
        <end position="380"/>
    </location>
</feature>
<feature type="turn" evidence="14">
    <location>
        <begin position="381"/>
        <end position="383"/>
    </location>
</feature>
<feature type="helix" evidence="14">
    <location>
        <begin position="385"/>
        <end position="392"/>
    </location>
</feature>
<name>RAD23_YEAST</name>
<reference key="1">
    <citation type="journal article" date="1993" name="Mol. Cell. Biol.">
        <title>The Saccharomyces cerevisiae DNA repair gene RAD23 encodes a nuclear protein containing a ubiquitin-like domain required for biological function.</title>
        <authorList>
            <person name="Watkins J.F."/>
            <person name="Sung P."/>
            <person name="Prakash L."/>
            <person name="Prakash S."/>
        </authorList>
    </citation>
    <scope>NUCLEOTIDE SEQUENCE [GENOMIC DNA]</scope>
</reference>
<reference key="2">
    <citation type="journal article" date="1993" name="J. Mol. Biol.">
        <title>The gene clusters ARC and COR on chromosomes 5 and 10, respectively, of Saccharomyces cerevisiae share a common ancestry.</title>
        <authorList>
            <person name="Melnick L."/>
            <person name="Sherman F."/>
        </authorList>
    </citation>
    <scope>NUCLEOTIDE SEQUENCE [GENOMIC DNA / MRNA]</scope>
    <source>
        <strain>B-6441</strain>
    </source>
</reference>
<reference key="3">
    <citation type="journal article" date="1997" name="Nature">
        <title>The nucleotide sequence of Saccharomyces cerevisiae chromosome V.</title>
        <authorList>
            <person name="Dietrich F.S."/>
            <person name="Mulligan J.T."/>
            <person name="Hennessy K.M."/>
            <person name="Yelton M.A."/>
            <person name="Allen E."/>
            <person name="Araujo R."/>
            <person name="Aviles E."/>
            <person name="Berno A."/>
            <person name="Brennan T."/>
            <person name="Carpenter J."/>
            <person name="Chen E."/>
            <person name="Cherry J.M."/>
            <person name="Chung E."/>
            <person name="Duncan M."/>
            <person name="Guzman E."/>
            <person name="Hartzell G."/>
            <person name="Hunicke-Smith S."/>
            <person name="Hyman R.W."/>
            <person name="Kayser A."/>
            <person name="Komp C."/>
            <person name="Lashkari D."/>
            <person name="Lew H."/>
            <person name="Lin D."/>
            <person name="Mosedale D."/>
            <person name="Nakahara K."/>
            <person name="Namath A."/>
            <person name="Norgren R."/>
            <person name="Oefner P."/>
            <person name="Oh C."/>
            <person name="Petel F.X."/>
            <person name="Roberts D."/>
            <person name="Sehl P."/>
            <person name="Schramm S."/>
            <person name="Shogren T."/>
            <person name="Smith V."/>
            <person name="Taylor P."/>
            <person name="Wei Y."/>
            <person name="Botstein D."/>
            <person name="Davis R.W."/>
        </authorList>
    </citation>
    <scope>NUCLEOTIDE SEQUENCE [LARGE SCALE GENOMIC DNA]</scope>
    <source>
        <strain>ATCC 204508 / S288c</strain>
    </source>
</reference>
<reference key="4">
    <citation type="journal article" date="2014" name="G3 (Bethesda)">
        <title>The reference genome sequence of Saccharomyces cerevisiae: Then and now.</title>
        <authorList>
            <person name="Engel S.R."/>
            <person name="Dietrich F.S."/>
            <person name="Fisk D.G."/>
            <person name="Binkley G."/>
            <person name="Balakrishnan R."/>
            <person name="Costanzo M.C."/>
            <person name="Dwight S.S."/>
            <person name="Hitz B.C."/>
            <person name="Karra K."/>
            <person name="Nash R.S."/>
            <person name="Weng S."/>
            <person name="Wong E.D."/>
            <person name="Lloyd P."/>
            <person name="Skrzypek M.S."/>
            <person name="Miyasato S.R."/>
            <person name="Simison M."/>
            <person name="Cherry J.M."/>
        </authorList>
    </citation>
    <scope>GENOME REANNOTATION</scope>
    <source>
        <strain>ATCC 204508 / S288c</strain>
    </source>
</reference>
<reference key="5">
    <citation type="journal article" date="2007" name="Genome Res.">
        <title>Approaching a complete repository of sequence-verified protein-encoding clones for Saccharomyces cerevisiae.</title>
        <authorList>
            <person name="Hu Y."/>
            <person name="Rolfs A."/>
            <person name="Bhullar B."/>
            <person name="Murthy T.V.S."/>
            <person name="Zhu C."/>
            <person name="Berger M.F."/>
            <person name="Camargo A.A."/>
            <person name="Kelley F."/>
            <person name="McCarron S."/>
            <person name="Jepson D."/>
            <person name="Richardson A."/>
            <person name="Raphael J."/>
            <person name="Moreira D."/>
            <person name="Taycher E."/>
            <person name="Zuo D."/>
            <person name="Mohr S."/>
            <person name="Kane M.F."/>
            <person name="Williamson J."/>
            <person name="Simpson A.J.G."/>
            <person name="Bulyk M.L."/>
            <person name="Harlow E."/>
            <person name="Marsischky G."/>
            <person name="Kolodner R.D."/>
            <person name="LaBaer J."/>
        </authorList>
    </citation>
    <scope>NUCLEOTIDE SEQUENCE [GENOMIC DNA]</scope>
    <source>
        <strain>ATCC 204508 / S288c</strain>
    </source>
</reference>
<reference key="6">
    <citation type="journal article" date="2003" name="Nature">
        <title>Global analysis of protein localization in budding yeast.</title>
        <authorList>
            <person name="Huh W.-K."/>
            <person name="Falvo J.V."/>
            <person name="Gerke L.C."/>
            <person name="Carroll A.S."/>
            <person name="Howson R.W."/>
            <person name="Weissman J.S."/>
            <person name="O'Shea E.K."/>
        </authorList>
    </citation>
    <scope>SUBCELLULAR LOCATION [LARGE SCALE ANALYSIS]</scope>
</reference>
<reference key="7">
    <citation type="journal article" date="2003" name="Nature">
        <title>Global analysis of protein expression in yeast.</title>
        <authorList>
            <person name="Ghaemmaghami S."/>
            <person name="Huh W.-K."/>
            <person name="Bower K."/>
            <person name="Howson R.W."/>
            <person name="Belle A."/>
            <person name="Dephoure N."/>
            <person name="O'Shea E.K."/>
            <person name="Weissman J.S."/>
        </authorList>
    </citation>
    <scope>LEVEL OF PROTEIN EXPRESSION [LARGE SCALE ANALYSIS]</scope>
</reference>
<reference key="8">
    <citation type="journal article" date="2004" name="Biochem. Biophys. Res. Commun.">
        <title>The N-terminus of yeast peptide: N-glycanase interacts with the DNA repair protein Rad23.</title>
        <authorList>
            <person name="Biswas S."/>
            <person name="Katiyar S."/>
            <person name="Li G."/>
            <person name="Zhou X."/>
            <person name="Lennarz W.J."/>
            <person name="Schindelin H."/>
        </authorList>
    </citation>
    <scope>INTERACTION WITH PNG1</scope>
</reference>
<reference key="9">
    <citation type="journal article" date="2007" name="J. Proteome Res.">
        <title>Large-scale phosphorylation analysis of alpha-factor-arrested Saccharomyces cerevisiae.</title>
        <authorList>
            <person name="Li X."/>
            <person name="Gerber S.A."/>
            <person name="Rudner A.D."/>
            <person name="Beausoleil S.A."/>
            <person name="Haas W."/>
            <person name="Villen J."/>
            <person name="Elias J.E."/>
            <person name="Gygi S.P."/>
        </authorList>
    </citation>
    <scope>PHOSPHORYLATION [LARGE SCALE ANALYSIS] AT THR-139</scope>
    <scope>IDENTIFICATION BY MASS SPECTROMETRY [LARGE SCALE ANALYSIS]</scope>
    <source>
        <strain>ADR376</strain>
    </source>
</reference>
<reference key="10">
    <citation type="journal article" date="2008" name="Mol. Cell. Proteomics">
        <title>A multidimensional chromatography technology for in-depth phosphoproteome analysis.</title>
        <authorList>
            <person name="Albuquerque C.P."/>
            <person name="Smolka M.B."/>
            <person name="Payne S.H."/>
            <person name="Bafna V."/>
            <person name="Eng J."/>
            <person name="Zhou H."/>
        </authorList>
    </citation>
    <scope>PHOSPHORYLATION [LARGE SCALE ANALYSIS] AT SER-121</scope>
    <scope>IDENTIFICATION BY MASS SPECTROMETRY [LARGE SCALE ANALYSIS]</scope>
</reference>
<reference key="11">
    <citation type="journal article" date="2009" name="Science">
        <title>Global analysis of Cdk1 substrate phosphorylation sites provides insights into evolution.</title>
        <authorList>
            <person name="Holt L.J."/>
            <person name="Tuch B.B."/>
            <person name="Villen J."/>
            <person name="Johnson A.D."/>
            <person name="Gygi S.P."/>
            <person name="Morgan D.O."/>
        </authorList>
    </citation>
    <scope>PHOSPHORYLATION [LARGE SCALE ANALYSIS] AT THR-94 AND THR-139</scope>
    <scope>IDENTIFICATION BY MASS SPECTROMETRY [LARGE SCALE ANALYSIS]</scope>
</reference>
<reference key="12">
    <citation type="journal article" date="2012" name="Proteomics">
        <title>Sites of ubiquitin attachment in Saccharomyces cerevisiae.</title>
        <authorList>
            <person name="Starita L.M."/>
            <person name="Lo R.S."/>
            <person name="Eng J.K."/>
            <person name="von Haller P.D."/>
            <person name="Fields S."/>
        </authorList>
    </citation>
    <scope>UBIQUITINATION [LARGE SCALE ANALYSIS] AT LYS-49</scope>
    <scope>IDENTIFICATION BY MASS SPECTROMETRY [LARGE SCALE ANALYSIS]</scope>
</reference>
<reference key="13">
    <citation type="journal article" date="2005" name="Proc. Natl. Acad. Sci. U.S.A.">
        <title>Structure of a peptide:N-glycanase-Rad23 complex: insight into the deglycosylation for denatured glycoproteins.</title>
        <authorList>
            <person name="Lee J.-H."/>
            <person name="Choi J.M."/>
            <person name="Lee C."/>
            <person name="Yi K.J."/>
            <person name="Cho Y."/>
        </authorList>
    </citation>
    <scope>X-RAY CRYSTALLOGRAPHY (2.8 ANGSTROMS) OF 238-309 IN COMPLEX WITH PNG1</scope>
</reference>